<organism>
    <name type="scientific">Saccharomyces cerevisiae (strain ATCC 204508 / S288c)</name>
    <name type="common">Baker's yeast</name>
    <dbReference type="NCBI Taxonomy" id="559292"/>
    <lineage>
        <taxon>Eukaryota</taxon>
        <taxon>Fungi</taxon>
        <taxon>Dikarya</taxon>
        <taxon>Ascomycota</taxon>
        <taxon>Saccharomycotina</taxon>
        <taxon>Saccharomycetes</taxon>
        <taxon>Saccharomycetales</taxon>
        <taxon>Saccharomycetaceae</taxon>
        <taxon>Saccharomyces</taxon>
    </lineage>
</organism>
<sequence length="407" mass="45908">METYETSIGTQSYPPTLFPPPLGTGGFTTSGYIHALVDSTSNSNSNSNTNSNTNSNTNSNSDTKIPIVQISDDSHITHDSFKPYMEYHDASHLRNRNISKADQVESTEVMEQFTQWSNYKMRSRSPTINAKPIRHTSQRRTDFTSKNELSKFSKNHNFIFHKGFLKRQHSIRREDRQAKVRSRFRSKKELTSVLNYIELEQMDIANVLASQPVNLHAIRNLTSRDPAVTPIPFLRSQMYATSSRPPYLRNRSISRKLPKSQPGSLPTTMPATATKTIKQNSTTPTTRSVYNKNVGRSNTSPSVLYHPKRRGKLNTKSHARKEQLLLELWREYLMLVITQRTQLRLTLLCSPGSASNESSVCSSNASDLDMSLLSTPSSLFQMAGETKSNPIIIPDSQDDSILSSDPF</sequence>
<keyword id="KW-0963">Cytoplasm</keyword>
<keyword id="KW-0597">Phosphoprotein</keyword>
<keyword id="KW-1185">Reference proteome</keyword>
<dbReference type="EMBL" id="X86470">
    <property type="protein sequence ID" value="CAA60180.1"/>
    <property type="molecule type" value="Genomic_DNA"/>
</dbReference>
<dbReference type="EMBL" id="Z71354">
    <property type="protein sequence ID" value="CAA95952.1"/>
    <property type="molecule type" value="Genomic_DNA"/>
</dbReference>
<dbReference type="EMBL" id="BK006947">
    <property type="protein sequence ID" value="DAA10467.1"/>
    <property type="molecule type" value="Genomic_DNA"/>
</dbReference>
<dbReference type="PIR" id="S53900">
    <property type="entry name" value="S53900"/>
</dbReference>
<dbReference type="RefSeq" id="NP_014321.3">
    <property type="nucleotide sequence ID" value="NM_001182916.3"/>
</dbReference>
<dbReference type="BioGRID" id="35745">
    <property type="interactions" value="135"/>
</dbReference>
<dbReference type="DIP" id="DIP-1980N"/>
<dbReference type="FunCoup" id="P53939">
    <property type="interactions" value="115"/>
</dbReference>
<dbReference type="IntAct" id="P53939">
    <property type="interactions" value="18"/>
</dbReference>
<dbReference type="MINT" id="P53939"/>
<dbReference type="STRING" id="4932.YNL078W"/>
<dbReference type="iPTMnet" id="P53939"/>
<dbReference type="PaxDb" id="4932-YNL078W"/>
<dbReference type="PeptideAtlas" id="P53939"/>
<dbReference type="EnsemblFungi" id="YNL078W_mRNA">
    <property type="protein sequence ID" value="YNL078W"/>
    <property type="gene ID" value="YNL078W"/>
</dbReference>
<dbReference type="GeneID" id="855646"/>
<dbReference type="KEGG" id="sce:YNL078W"/>
<dbReference type="AGR" id="SGD:S000005022"/>
<dbReference type="SGD" id="S000005022">
    <property type="gene designation" value="NIS1"/>
</dbReference>
<dbReference type="VEuPathDB" id="FungiDB:YNL078W"/>
<dbReference type="eggNOG" id="ENOG502SAJ9">
    <property type="taxonomic scope" value="Eukaryota"/>
</dbReference>
<dbReference type="HOGENOM" id="CLU_057191_0_0_1"/>
<dbReference type="InParanoid" id="P53939"/>
<dbReference type="OMA" id="IACKKGA"/>
<dbReference type="OrthoDB" id="4036037at2759"/>
<dbReference type="BioCyc" id="YEAST:G3O-33107-MONOMER"/>
<dbReference type="BioGRID-ORCS" id="855646">
    <property type="hits" value="0 hits in 10 CRISPR screens"/>
</dbReference>
<dbReference type="PRO" id="PR:P53939"/>
<dbReference type="Proteomes" id="UP000002311">
    <property type="component" value="Chromosome XIV"/>
</dbReference>
<dbReference type="RNAct" id="P53939">
    <property type="molecule type" value="protein"/>
</dbReference>
<dbReference type="GO" id="GO:0032153">
    <property type="term" value="C:cell division site"/>
    <property type="evidence" value="ECO:0000314"/>
    <property type="project" value="SGD"/>
</dbReference>
<dbReference type="GO" id="GO:0005935">
    <property type="term" value="C:cellular bud neck"/>
    <property type="evidence" value="ECO:0000314"/>
    <property type="project" value="SGD"/>
</dbReference>
<dbReference type="GO" id="GO:0032174">
    <property type="term" value="C:cellular bud neck septin collar"/>
    <property type="evidence" value="ECO:0000314"/>
    <property type="project" value="SGD"/>
</dbReference>
<dbReference type="GO" id="GO:0032177">
    <property type="term" value="C:cellular bud neck split septin rings"/>
    <property type="evidence" value="ECO:0000314"/>
    <property type="project" value="SGD"/>
</dbReference>
<dbReference type="GO" id="GO:0005621">
    <property type="term" value="C:cellular bud scar"/>
    <property type="evidence" value="ECO:0000314"/>
    <property type="project" value="SGD"/>
</dbReference>
<dbReference type="GO" id="GO:0005634">
    <property type="term" value="C:nucleus"/>
    <property type="evidence" value="ECO:0000314"/>
    <property type="project" value="SGD"/>
</dbReference>
<dbReference type="GO" id="GO:0032183">
    <property type="term" value="F:SUMO binding"/>
    <property type="evidence" value="ECO:0000247"/>
    <property type="project" value="SGD"/>
</dbReference>
<dbReference type="GO" id="GO:0007120">
    <property type="term" value="P:axial cellular bud site selection"/>
    <property type="evidence" value="ECO:0000315"/>
    <property type="project" value="SGD"/>
</dbReference>
<dbReference type="GO" id="GO:0045184">
    <property type="term" value="P:establishment of protein localization"/>
    <property type="evidence" value="ECO:0000315"/>
    <property type="project" value="SGD"/>
</dbReference>
<dbReference type="GO" id="GO:0140014">
    <property type="term" value="P:mitotic nuclear division"/>
    <property type="evidence" value="ECO:0000353"/>
    <property type="project" value="SGD"/>
</dbReference>
<feature type="chain" id="PRO_0000203447" description="Protein NIS1">
    <location>
        <begin position="1"/>
        <end position="407"/>
    </location>
</feature>
<feature type="region of interest" description="Disordered" evidence="1">
    <location>
        <begin position="41"/>
        <end position="64"/>
    </location>
</feature>
<feature type="region of interest" description="Disordered" evidence="1">
    <location>
        <begin position="277"/>
        <end position="315"/>
    </location>
</feature>
<feature type="short sequence motif" description="SUMO-binding">
    <location>
        <begin position="391"/>
        <end position="398"/>
    </location>
</feature>
<feature type="compositionally biased region" description="Low complexity" evidence="1">
    <location>
        <begin position="41"/>
        <end position="61"/>
    </location>
</feature>
<feature type="compositionally biased region" description="Polar residues" evidence="1">
    <location>
        <begin position="277"/>
        <end position="302"/>
    </location>
</feature>
<feature type="compositionally biased region" description="Basic residues" evidence="1">
    <location>
        <begin position="306"/>
        <end position="315"/>
    </location>
</feature>
<feature type="modified residue" description="Phosphoserine" evidence="13">
    <location>
        <position position="260"/>
    </location>
</feature>
<feature type="modified residue" description="Phosphoserine" evidence="13">
    <location>
        <position position="264"/>
    </location>
</feature>
<feature type="modified residue" description="Phosphoserine" evidence="12">
    <location>
        <position position="300"/>
    </location>
</feature>
<feature type="modified residue" description="Phosphoserine" evidence="13">
    <location>
        <position position="302"/>
    </location>
</feature>
<gene>
    <name type="primary">NIS1</name>
    <name type="synonym">JIP1</name>
    <name type="ordered locus">YNL078W</name>
    <name type="ORF">N2337</name>
</gene>
<proteinExistence type="evidence at protein level"/>
<evidence type="ECO:0000256" key="1">
    <source>
        <dbReference type="SAM" id="MobiDB-lite"/>
    </source>
</evidence>
<evidence type="ECO:0000269" key="2">
    <source>
    </source>
</evidence>
<evidence type="ECO:0000269" key="3">
    <source>
    </source>
</evidence>
<evidence type="ECO:0000269" key="4">
    <source>
    </source>
</evidence>
<evidence type="ECO:0000269" key="5">
    <source>
    </source>
</evidence>
<evidence type="ECO:0000269" key="6">
    <source>
    </source>
</evidence>
<evidence type="ECO:0000269" key="7">
    <source>
    </source>
</evidence>
<evidence type="ECO:0000269" key="8">
    <source>
    </source>
</evidence>
<evidence type="ECO:0000269" key="9">
    <source>
    </source>
</evidence>
<evidence type="ECO:0000269" key="10">
    <source>
    </source>
</evidence>
<evidence type="ECO:0000269" key="11">
    <source>
    </source>
</evidence>
<evidence type="ECO:0007744" key="12">
    <source>
    </source>
</evidence>
<evidence type="ECO:0007744" key="13">
    <source>
    </source>
</evidence>
<reference key="1">
    <citation type="journal article" date="1996" name="Yeast">
        <title>Sequencing a cosmid clone of Saccharomyces cerevisiae chromosome XIV reveals 12 new open reading frames (ORFs) and an ancient duplication of six ORFs.</title>
        <authorList>
            <person name="Poehlmann R."/>
            <person name="Philippsen P."/>
        </authorList>
    </citation>
    <scope>NUCLEOTIDE SEQUENCE [GENOMIC DNA]</scope>
    <source>
        <strain>ATCC 96604 / S288c / FY1679</strain>
    </source>
</reference>
<reference key="2">
    <citation type="journal article" date="1997" name="Nature">
        <title>The nucleotide sequence of Saccharomyces cerevisiae chromosome XIV and its evolutionary implications.</title>
        <authorList>
            <person name="Philippsen P."/>
            <person name="Kleine K."/>
            <person name="Poehlmann R."/>
            <person name="Duesterhoeft A."/>
            <person name="Hamberg K."/>
            <person name="Hegemann J.H."/>
            <person name="Obermaier B."/>
            <person name="Urrestarazu L.A."/>
            <person name="Aert R."/>
            <person name="Albermann K."/>
            <person name="Altmann R."/>
            <person name="Andre B."/>
            <person name="Baladron V."/>
            <person name="Ballesta J.P.G."/>
            <person name="Becam A.-M."/>
            <person name="Beinhauer J.D."/>
            <person name="Boskovic J."/>
            <person name="Buitrago M.J."/>
            <person name="Bussereau F."/>
            <person name="Coster F."/>
            <person name="Crouzet M."/>
            <person name="D'Angelo M."/>
            <person name="Dal Pero F."/>
            <person name="De Antoni A."/>
            <person name="del Rey F."/>
            <person name="Doignon F."/>
            <person name="Domdey H."/>
            <person name="Dubois E."/>
            <person name="Fiedler T.A."/>
            <person name="Fleig U."/>
            <person name="Floeth M."/>
            <person name="Fritz C."/>
            <person name="Gaillardin C."/>
            <person name="Garcia-Cantalejo J.M."/>
            <person name="Glansdorff N."/>
            <person name="Goffeau A."/>
            <person name="Gueldener U."/>
            <person name="Herbert C.J."/>
            <person name="Heumann K."/>
            <person name="Heuss-Neitzel D."/>
            <person name="Hilbert H."/>
            <person name="Hinni K."/>
            <person name="Iraqui Houssaini I."/>
            <person name="Jacquet M."/>
            <person name="Jimenez A."/>
            <person name="Jonniaux J.-L."/>
            <person name="Karpfinger-Hartl L."/>
            <person name="Lanfranchi G."/>
            <person name="Lepingle A."/>
            <person name="Levesque H."/>
            <person name="Lyck R."/>
            <person name="Maftahi M."/>
            <person name="Mallet L."/>
            <person name="Maurer C.T.C."/>
            <person name="Messenguy F."/>
            <person name="Mewes H.-W."/>
            <person name="Moestl D."/>
            <person name="Nasr F."/>
            <person name="Nicaud J.-M."/>
            <person name="Niedenthal R.K."/>
            <person name="Pandolfo D."/>
            <person name="Pierard A."/>
            <person name="Piravandi E."/>
            <person name="Planta R.J."/>
            <person name="Pohl T.M."/>
            <person name="Purnelle B."/>
            <person name="Rebischung C."/>
            <person name="Remacha M.A."/>
            <person name="Revuelta J.L."/>
            <person name="Rinke M."/>
            <person name="Saiz J.E."/>
            <person name="Sartorello F."/>
            <person name="Scherens B."/>
            <person name="Sen-Gupta M."/>
            <person name="Soler-Mira A."/>
            <person name="Urbanus J.H.M."/>
            <person name="Valle G."/>
            <person name="Van Dyck L."/>
            <person name="Verhasselt P."/>
            <person name="Vierendeels F."/>
            <person name="Vissers S."/>
            <person name="Voet M."/>
            <person name="Volckaert G."/>
            <person name="Wach A."/>
            <person name="Wambutt R."/>
            <person name="Wedler H."/>
            <person name="Zollner A."/>
            <person name="Hani J."/>
        </authorList>
    </citation>
    <scope>NUCLEOTIDE SEQUENCE [LARGE SCALE GENOMIC DNA]</scope>
    <source>
        <strain>ATCC 204508 / S288c</strain>
    </source>
</reference>
<reference key="3">
    <citation type="journal article" date="2014" name="G3 (Bethesda)">
        <title>The reference genome sequence of Saccharomyces cerevisiae: Then and now.</title>
        <authorList>
            <person name="Engel S.R."/>
            <person name="Dietrich F.S."/>
            <person name="Fisk D.G."/>
            <person name="Binkley G."/>
            <person name="Balakrishnan R."/>
            <person name="Costanzo M.C."/>
            <person name="Dwight S.S."/>
            <person name="Hitz B.C."/>
            <person name="Karra K."/>
            <person name="Nash R.S."/>
            <person name="Weng S."/>
            <person name="Wong E.D."/>
            <person name="Lloyd P."/>
            <person name="Skrzypek M.S."/>
            <person name="Miyasato S.R."/>
            <person name="Simison M."/>
            <person name="Cherry J.M."/>
        </authorList>
    </citation>
    <scope>GENOME REANNOTATION</scope>
    <source>
        <strain>ATCC 204508 / S288c</strain>
    </source>
</reference>
<reference key="4">
    <citation type="journal article" date="2001" name="Genes Genet. Syst.">
        <title>Nis1 encoded by YNL078W: a new neck protein of Saccharomyces cerevisiae.</title>
        <authorList>
            <person name="Iwase M."/>
            <person name="Toh-e A."/>
        </authorList>
    </citation>
    <scope>SUBCELLULAR LOCATION</scope>
    <scope>PHOSPHORYLATION</scope>
    <scope>INTERACTION WITH SHS1 AND NAP1</scope>
</reference>
<reference key="5">
    <citation type="journal article" date="2001" name="Mol. Microbiol.">
        <title>Overlapping and distinct roles of the duplicated yeast transcription factors Ace2p and Swi5p.</title>
        <authorList>
            <person name="Doolin M.-T."/>
            <person name="Johnson A.L."/>
            <person name="Johnston L.H."/>
            <person name="Butler G."/>
        </authorList>
    </citation>
    <scope>INDUCTION</scope>
</reference>
<reference key="6">
    <citation type="journal article" date="2002" name="Microbiology">
        <title>Functional analysis of the Saccharomyces cerevisiae DUP240 multigene family reveals membrane-associated proteins that are not essential for cell viability.</title>
        <authorList>
            <person name="Poirey R."/>
            <person name="Despons L."/>
            <person name="Leh V."/>
            <person name="Lafuente M.-J."/>
            <person name="Potier S."/>
            <person name="Souciet J.-L."/>
            <person name="Jauniaux J.-C."/>
        </authorList>
    </citation>
    <scope>INTERACTION WITH PRM8</scope>
</reference>
<reference key="7">
    <citation type="journal article" date="2003" name="Nature">
        <title>Global analysis of protein localization in budding yeast.</title>
        <authorList>
            <person name="Huh W.-K."/>
            <person name="Falvo J.V."/>
            <person name="Gerke L.C."/>
            <person name="Carroll A.S."/>
            <person name="Howson R.W."/>
            <person name="Weissman J.S."/>
            <person name="O'Shea E.K."/>
        </authorList>
    </citation>
    <scope>SUBCELLULAR LOCATION [LARGE SCALE ANALYSIS]</scope>
</reference>
<reference key="8">
    <citation type="journal article" date="2003" name="Nature">
        <title>Global analysis of protein expression in yeast.</title>
        <authorList>
            <person name="Ghaemmaghami S."/>
            <person name="Huh W.-K."/>
            <person name="Bower K."/>
            <person name="Howson R.W."/>
            <person name="Belle A."/>
            <person name="Dephoure N."/>
            <person name="O'Shea E.K."/>
            <person name="Weissman J.S."/>
        </authorList>
    </citation>
    <scope>LEVEL OF PROTEIN EXPRESSION [LARGE SCALE ANALYSIS]</scope>
</reference>
<reference key="9">
    <citation type="journal article" date="2004" name="Cell Struct. Funct.">
        <title>Ybr267w is a new cytoplasmic protein belonging to the mitotic signaling network of Saccharomyces cerevisiae.</title>
        <authorList>
            <person name="Iwase M."/>
            <person name="Toh-e A."/>
        </authorList>
    </citation>
    <scope>INTERACTION WITH REI1</scope>
    <scope>FUNCTION</scope>
</reference>
<reference key="10">
    <citation type="journal article" date="2006" name="J. Cell Biol.">
        <title>Sumoylation of the budding yeast kinetochore protein Ndc10 is required for Ndc10 spindle localization and regulation of anaphase spindle elongation.</title>
        <authorList>
            <person name="Montpetit B."/>
            <person name="Hazbun T.R."/>
            <person name="Fields S."/>
            <person name="Hieter P."/>
        </authorList>
    </citation>
    <scope>INTERACTION WITH CBF2</scope>
</reference>
<reference key="11">
    <citation type="journal article" date="2007" name="J. Biol. Chem.">
        <title>Ubiquitin-dependent proteolytic control of SUMO conjugates.</title>
        <authorList>
            <person name="Uzunova K."/>
            <person name="Goettsche K."/>
            <person name="Miteva M."/>
            <person name="Weisshaar S.R."/>
            <person name="Glanemann C."/>
            <person name="Schnellhardt M."/>
            <person name="Niessen M."/>
            <person name="Scheel H."/>
            <person name="Hofmann K."/>
            <person name="Johnson E.S."/>
            <person name="Praefcke G.J.K."/>
            <person name="Dohmen R.J."/>
        </authorList>
    </citation>
    <scope>DOMAIN</scope>
    <scope>INTERACTION WITH SUMOYLATED PROTEINS</scope>
</reference>
<reference key="12">
    <citation type="journal article" date="2007" name="J. Proteome Res.">
        <title>Large-scale phosphorylation analysis of alpha-factor-arrested Saccharomyces cerevisiae.</title>
        <authorList>
            <person name="Li X."/>
            <person name="Gerber S.A."/>
            <person name="Rudner A.D."/>
            <person name="Beausoleil S.A."/>
            <person name="Haas W."/>
            <person name="Villen J."/>
            <person name="Elias J.E."/>
            <person name="Gygi S.P."/>
        </authorList>
    </citation>
    <scope>PHOSPHORYLATION [LARGE SCALE ANALYSIS] AT SER-300</scope>
    <scope>IDENTIFICATION BY MASS SPECTROMETRY [LARGE SCALE ANALYSIS]</scope>
    <source>
        <strain>ADR376</strain>
    </source>
</reference>
<reference key="13">
    <citation type="journal article" date="2007" name="Mol. Genet. Genomics">
        <title>The jmjN and jmjC domains of the yeast zinc finger protein Gis1 interact with 19 proteins involved in transcription, sumoylation and DNA repair.</title>
        <authorList>
            <person name="Tronnersjoe S."/>
            <person name="Hanefalk C."/>
            <person name="Balciunas D."/>
            <person name="Hu G.-Z."/>
            <person name="Nordberg N."/>
            <person name="Muren E."/>
            <person name="Ronne H."/>
        </authorList>
    </citation>
    <scope>INTERACTION WITH GIS1</scope>
</reference>
<reference key="14">
    <citation type="journal article" date="2008" name="Mol. Cell. Biol.">
        <title>Phosphorylation by casein kinase 2 regulates Nap1 localization and function.</title>
        <authorList>
            <person name="Calvert M.E.K."/>
            <person name="Keck K.M."/>
            <person name="Ptak C."/>
            <person name="Shabanowitz J."/>
            <person name="Hunt D.F."/>
            <person name="Pemberton L.F."/>
        </authorList>
    </citation>
    <scope>INTERACTION WITH NAP1</scope>
    <scope>IDENTIFICATION BY MASS SPECTROMETRY</scope>
</reference>
<reference key="15">
    <citation type="journal article" date="2008" name="Mol. Cell. Proteomics">
        <title>A multidimensional chromatography technology for in-depth phosphoproteome analysis.</title>
        <authorList>
            <person name="Albuquerque C.P."/>
            <person name="Smolka M.B."/>
            <person name="Payne S.H."/>
            <person name="Bafna V."/>
            <person name="Eng J."/>
            <person name="Zhou H."/>
        </authorList>
    </citation>
    <scope>IDENTIFICATION BY MASS SPECTROMETRY [LARGE SCALE ANALYSIS]</scope>
</reference>
<reference key="16">
    <citation type="journal article" date="2009" name="Science">
        <title>Global analysis of Cdk1 substrate phosphorylation sites provides insights into evolution.</title>
        <authorList>
            <person name="Holt L.J."/>
            <person name="Tuch B.B."/>
            <person name="Villen J."/>
            <person name="Johnson A.D."/>
            <person name="Gygi S.P."/>
            <person name="Morgan D.O."/>
        </authorList>
    </citation>
    <scope>PHOSPHORYLATION [LARGE SCALE ANALYSIS] AT SER-260; SER-264 AND SER-302</scope>
    <scope>IDENTIFICATION BY MASS SPECTROMETRY [LARGE SCALE ANALYSIS]</scope>
</reference>
<protein>
    <recommendedName>
        <fullName>Protein NIS1</fullName>
    </recommendedName>
    <alternativeName>
        <fullName>Jumonji domain-interacting protein 1</fullName>
    </alternativeName>
    <alternativeName>
        <fullName>Neck protein interacting with septins protein 1</fullName>
    </alternativeName>
</protein>
<name>NIS1_YEAST</name>
<accession>P53939</accession>
<accession>D6W1A1</accession>
<comment type="function">
    <text evidence="7">May be involved in a mitotic signaling network. Binds sumoylated proteins and may stabilize SUMO chains.</text>
</comment>
<comment type="subunit">
    <text evidence="3 4 7 8 9 10 11">Interacts with CBF2, GIS1, NAP1, PRM8, REI1, SHS1 and SMT3.</text>
</comment>
<comment type="interaction">
    <interactant intactId="EBI-28760">
        <id>P53939</id>
    </interactant>
    <interactant intactId="EBI-29423">
        <id>Q99299</id>
        <label>AIM44</label>
    </interactant>
    <organismsDiffer>false</organismsDiffer>
    <experiments>5</experiments>
</comment>
<comment type="interaction">
    <interactant intactId="EBI-28760">
        <id>P53939</id>
    </interactant>
    <interactant intactId="EBI-11850">
        <id>P25293</id>
        <label>NAP1</label>
    </interactant>
    <organismsDiffer>false</organismsDiffer>
    <experiments>6</experiments>
</comment>
<comment type="interaction">
    <interactant intactId="EBI-28760">
        <id>P53939</id>
    </interactant>
    <interactant intactId="EBI-36841">
        <id>Q08229</id>
        <label>NBA1</label>
    </interactant>
    <organismsDiffer>false</organismsDiffer>
    <experiments>4</experiments>
</comment>
<comment type="subcellular location">
    <subcellularLocation>
        <location evidence="3">Bud neck</location>
    </subcellularLocation>
    <subcellularLocation>
        <location evidence="5">Cytoplasm</location>
        <location evidence="5">Cell cortex</location>
    </subcellularLocation>
</comment>
<comment type="induction">
    <text evidence="2">Expression is regulated by the ACE2 and SWI5 transcription factors.</text>
</comment>
<comment type="miscellaneous">
    <text evidence="6">Present with 504 molecules/cell in log phase SD medium.</text>
</comment>